<dbReference type="EC" id="2.4.1.19"/>
<dbReference type="PIR" id="S26399">
    <property type="entry name" value="ALBSX1"/>
</dbReference>
<dbReference type="SMR" id="P31746"/>
<dbReference type="CAZy" id="CBM20">
    <property type="family name" value="Carbohydrate-Binding Module Family 20"/>
</dbReference>
<dbReference type="CAZy" id="GH13">
    <property type="family name" value="Glycoside Hydrolase Family 13"/>
</dbReference>
<dbReference type="BRENDA" id="2.4.1.19">
    <property type="organism ID" value="691"/>
</dbReference>
<dbReference type="GO" id="GO:0005576">
    <property type="term" value="C:extracellular region"/>
    <property type="evidence" value="ECO:0007669"/>
    <property type="project" value="UniProtKB-SubCell"/>
</dbReference>
<dbReference type="GO" id="GO:0004556">
    <property type="term" value="F:alpha-amylase activity"/>
    <property type="evidence" value="ECO:0007669"/>
    <property type="project" value="InterPro"/>
</dbReference>
<dbReference type="GO" id="GO:0043895">
    <property type="term" value="F:cyclomaltodextrin glucanotransferase activity"/>
    <property type="evidence" value="ECO:0007669"/>
    <property type="project" value="UniProtKB-EC"/>
</dbReference>
<dbReference type="GO" id="GO:0046872">
    <property type="term" value="F:metal ion binding"/>
    <property type="evidence" value="ECO:0007669"/>
    <property type="project" value="UniProtKB-KW"/>
</dbReference>
<dbReference type="GO" id="GO:2001070">
    <property type="term" value="F:starch binding"/>
    <property type="evidence" value="ECO:0007669"/>
    <property type="project" value="InterPro"/>
</dbReference>
<dbReference type="GO" id="GO:0005975">
    <property type="term" value="P:carbohydrate metabolic process"/>
    <property type="evidence" value="ECO:0007669"/>
    <property type="project" value="InterPro"/>
</dbReference>
<dbReference type="CDD" id="cd11320">
    <property type="entry name" value="AmyAc_AmyMalt_CGTase_like"/>
    <property type="match status" value="1"/>
</dbReference>
<dbReference type="CDD" id="cd00604">
    <property type="entry name" value="IPT_CGTD"/>
    <property type="match status" value="1"/>
</dbReference>
<dbReference type="FunFam" id="2.60.40.10:FF:000552">
    <property type="entry name" value="Related to glucoamylase"/>
    <property type="match status" value="1"/>
</dbReference>
<dbReference type="Gene3D" id="3.20.20.80">
    <property type="entry name" value="Glycosidases"/>
    <property type="match status" value="1"/>
</dbReference>
<dbReference type="Gene3D" id="2.60.40.1180">
    <property type="entry name" value="Golgi alpha-mannosidase II"/>
    <property type="match status" value="1"/>
</dbReference>
<dbReference type="Gene3D" id="2.60.40.10">
    <property type="entry name" value="Immunoglobulins"/>
    <property type="match status" value="2"/>
</dbReference>
<dbReference type="InterPro" id="IPR031319">
    <property type="entry name" value="A-amylase_C"/>
</dbReference>
<dbReference type="InterPro" id="IPR006046">
    <property type="entry name" value="Alpha_amylase"/>
</dbReference>
<dbReference type="InterPro" id="IPR013784">
    <property type="entry name" value="Carb-bd-like_fold"/>
</dbReference>
<dbReference type="InterPro" id="IPR002044">
    <property type="entry name" value="CBM20"/>
</dbReference>
<dbReference type="InterPro" id="IPR006047">
    <property type="entry name" value="Glyco_hydro_13_cat_dom"/>
</dbReference>
<dbReference type="InterPro" id="IPR013780">
    <property type="entry name" value="Glyco_hydro_b"/>
</dbReference>
<dbReference type="InterPro" id="IPR017853">
    <property type="entry name" value="Glycoside_hydrolase_SF"/>
</dbReference>
<dbReference type="InterPro" id="IPR013783">
    <property type="entry name" value="Ig-like_fold"/>
</dbReference>
<dbReference type="InterPro" id="IPR014756">
    <property type="entry name" value="Ig_E-set"/>
</dbReference>
<dbReference type="InterPro" id="IPR002909">
    <property type="entry name" value="IPT_dom"/>
</dbReference>
<dbReference type="PANTHER" id="PTHR10357:SF215">
    <property type="entry name" value="ALPHA-AMYLASE 1"/>
    <property type="match status" value="1"/>
</dbReference>
<dbReference type="PANTHER" id="PTHR10357">
    <property type="entry name" value="ALPHA-AMYLASE FAMILY MEMBER"/>
    <property type="match status" value="1"/>
</dbReference>
<dbReference type="Pfam" id="PF00128">
    <property type="entry name" value="Alpha-amylase"/>
    <property type="match status" value="1"/>
</dbReference>
<dbReference type="Pfam" id="PF00686">
    <property type="entry name" value="CBM_20"/>
    <property type="match status" value="1"/>
</dbReference>
<dbReference type="Pfam" id="PF01833">
    <property type="entry name" value="TIG"/>
    <property type="match status" value="1"/>
</dbReference>
<dbReference type="PRINTS" id="PR00110">
    <property type="entry name" value="ALPHAAMYLASE"/>
</dbReference>
<dbReference type="SMART" id="SM00642">
    <property type="entry name" value="Aamy"/>
    <property type="match status" value="1"/>
</dbReference>
<dbReference type="SMART" id="SM00632">
    <property type="entry name" value="Aamy_C"/>
    <property type="match status" value="1"/>
</dbReference>
<dbReference type="SMART" id="SM01065">
    <property type="entry name" value="CBM_2"/>
    <property type="match status" value="1"/>
</dbReference>
<dbReference type="SUPFAM" id="SSF51445">
    <property type="entry name" value="(Trans)glycosidases"/>
    <property type="match status" value="1"/>
</dbReference>
<dbReference type="SUPFAM" id="SSF81296">
    <property type="entry name" value="E set domains"/>
    <property type="match status" value="1"/>
</dbReference>
<dbReference type="SUPFAM" id="SSF51011">
    <property type="entry name" value="Glycosyl hydrolase domain"/>
    <property type="match status" value="1"/>
</dbReference>
<dbReference type="SUPFAM" id="SSF49452">
    <property type="entry name" value="Starch-binding domain-like"/>
    <property type="match status" value="1"/>
</dbReference>
<dbReference type="PROSITE" id="PS51166">
    <property type="entry name" value="CBM20"/>
    <property type="match status" value="1"/>
</dbReference>
<organism>
    <name type="scientific">Bacillus sp. (strain 1-1)</name>
    <dbReference type="NCBI Taxonomy" id="29334"/>
    <lineage>
        <taxon>Bacteria</taxon>
        <taxon>Bacillati</taxon>
        <taxon>Bacillota</taxon>
        <taxon>Bacilli</taxon>
        <taxon>Bacillales</taxon>
        <taxon>Bacillaceae</taxon>
        <taxon>Bacillus</taxon>
    </lineage>
</organism>
<gene>
    <name type="primary">cgt</name>
</gene>
<proteinExistence type="evidence at protein level"/>
<comment type="catalytic activity">
    <reaction>
        <text>Cyclizes part of a (1-&gt;4)-alpha-D-glucan chain by formation of a (1-&gt;4)-alpha-D-glucosidic bond.</text>
        <dbReference type="EC" id="2.4.1.19"/>
    </reaction>
</comment>
<comment type="cofactor">
    <cofactor evidence="1">
        <name>Ca(2+)</name>
        <dbReference type="ChEBI" id="CHEBI:29108"/>
    </cofactor>
    <text evidence="1">Binds 2 calcium ions per subunit.</text>
</comment>
<comment type="subunit">
    <text>Monomer.</text>
</comment>
<comment type="subcellular location">
    <subcellularLocation>
        <location evidence="1">Secreted</location>
    </subcellularLocation>
</comment>
<comment type="domain">
    <text>May consist of two protein domains: the one in the N-terminal side cleaves the alpha-1,4-glucosidic bond in starch, and the other in the C-terminal side catalyzes other activities, including the reconstitution of an alpha-1,4-glucosidic linkage for cyclizing the maltooligosaccharide produced.</text>
</comment>
<comment type="similarity">
    <text evidence="4">Belongs to the glycosyl hydrolase 13 family.</text>
</comment>
<accession>P31746</accession>
<feature type="signal peptide" evidence="3">
    <location>
        <begin position="1"/>
        <end position="29"/>
    </location>
</feature>
<feature type="chain" id="PRO_0000001438" description="Cyclomaltodextrin glucanotransferase">
    <location>
        <begin position="30"/>
        <end position="703"/>
    </location>
</feature>
<feature type="domain" description="IPT/TIG">
    <location>
        <begin position="520"/>
        <end position="598"/>
    </location>
</feature>
<feature type="domain" description="CBM20" evidence="2">
    <location>
        <begin position="599"/>
        <end position="703"/>
    </location>
</feature>
<feature type="region of interest" description="A1">
    <location>
        <begin position="30"/>
        <end position="160"/>
    </location>
</feature>
<feature type="region of interest" description="B">
    <location>
        <begin position="161"/>
        <end position="224"/>
    </location>
</feature>
<feature type="region of interest" description="A2">
    <location>
        <begin position="225"/>
        <end position="428"/>
    </location>
</feature>
<feature type="region of interest" description="C">
    <location>
        <begin position="429"/>
        <end position="516"/>
    </location>
</feature>
<feature type="region of interest" description="D">
    <location>
        <begin position="517"/>
        <end position="600"/>
    </location>
</feature>
<feature type="region of interest" description="E">
    <location>
        <begin position="601"/>
        <end position="703"/>
    </location>
</feature>
<feature type="active site" description="Nucleophile" evidence="1">
    <location>
        <position position="251"/>
    </location>
</feature>
<feature type="active site" description="Proton donor" evidence="1">
    <location>
        <position position="279"/>
    </location>
</feature>
<feature type="binding site" evidence="1">
    <location>
        <position position="52"/>
    </location>
    <ligand>
        <name>Ca(2+)</name>
        <dbReference type="ChEBI" id="CHEBI:29108"/>
        <label>1</label>
    </ligand>
</feature>
<feature type="binding site" evidence="1">
    <location>
        <position position="54"/>
    </location>
    <ligand>
        <name>Ca(2+)</name>
        <dbReference type="ChEBI" id="CHEBI:29108"/>
        <label>1</label>
    </ligand>
</feature>
<feature type="binding site" evidence="1">
    <location>
        <position position="57"/>
    </location>
    <ligand>
        <name>Ca(2+)</name>
        <dbReference type="ChEBI" id="CHEBI:29108"/>
        <label>1</label>
    </ligand>
</feature>
<feature type="binding site" evidence="1">
    <location>
        <position position="58"/>
    </location>
    <ligand>
        <name>Ca(2+)</name>
        <dbReference type="ChEBI" id="CHEBI:29108"/>
        <label>1</label>
    </ligand>
</feature>
<feature type="binding site" evidence="1">
    <location>
        <position position="76"/>
    </location>
    <ligand>
        <name>Ca(2+)</name>
        <dbReference type="ChEBI" id="CHEBI:29108"/>
        <label>1</label>
    </ligand>
</feature>
<feature type="binding site" evidence="1">
    <location>
        <position position="78"/>
    </location>
    <ligand>
        <name>Ca(2+)</name>
        <dbReference type="ChEBI" id="CHEBI:29108"/>
        <label>1</label>
    </ligand>
</feature>
<feature type="binding site" evidence="1">
    <location>
        <begin position="122"/>
        <end position="123"/>
    </location>
    <ligand>
        <name>substrate</name>
    </ligand>
</feature>
<feature type="binding site" evidence="1">
    <location>
        <position position="161"/>
    </location>
    <ligand>
        <name>Ca(2+)</name>
        <dbReference type="ChEBI" id="CHEBI:29108"/>
        <label>2</label>
    </ligand>
</feature>
<feature type="binding site" evidence="1">
    <location>
        <position position="162"/>
    </location>
    <ligand>
        <name>substrate</name>
    </ligand>
</feature>
<feature type="binding site" evidence="1">
    <location>
        <position position="212"/>
    </location>
    <ligand>
        <name>Ca(2+)</name>
        <dbReference type="ChEBI" id="CHEBI:29108"/>
        <label>2</label>
    </ligand>
</feature>
<feature type="binding site" evidence="1">
    <location>
        <begin position="215"/>
        <end position="218"/>
    </location>
    <ligand>
        <name>substrate</name>
    </ligand>
</feature>
<feature type="binding site" evidence="1">
    <location>
        <position position="221"/>
    </location>
    <ligand>
        <name>Ca(2+)</name>
        <dbReference type="ChEBI" id="CHEBI:29108"/>
        <label>2</label>
    </ligand>
</feature>
<feature type="binding site" evidence="1">
    <location>
        <position position="249"/>
    </location>
    <ligand>
        <name>substrate</name>
    </ligand>
</feature>
<feature type="binding site" evidence="1">
    <location>
        <begin position="254"/>
        <end position="255"/>
    </location>
    <ligand>
        <name>substrate</name>
    </ligand>
</feature>
<feature type="binding site" evidence="1">
    <location>
        <position position="255"/>
    </location>
    <ligand>
        <name>Ca(2+)</name>
        <dbReference type="ChEBI" id="CHEBI:29108"/>
        <label>2</label>
    </ligand>
</feature>
<feature type="binding site" evidence="1">
    <location>
        <position position="349"/>
    </location>
    <ligand>
        <name>substrate</name>
    </ligand>
</feature>
<feature type="binding site" evidence="1">
    <location>
        <position position="393"/>
    </location>
    <ligand>
        <name>substrate</name>
    </ligand>
</feature>
<feature type="binding site" evidence="1">
    <location>
        <position position="397"/>
    </location>
    <ligand>
        <name>substrate</name>
    </ligand>
</feature>
<feature type="site" description="Transition state stabilizer" evidence="1">
    <location>
        <position position="350"/>
    </location>
</feature>
<feature type="disulfide bond" evidence="1">
    <location>
        <begin position="68"/>
        <end position="75"/>
    </location>
</feature>
<name>CDGT_BACS2</name>
<keyword id="KW-0106">Calcium</keyword>
<keyword id="KW-0903">Direct protein sequencing</keyword>
<keyword id="KW-1015">Disulfide bond</keyword>
<keyword id="KW-0328">Glycosyltransferase</keyword>
<keyword id="KW-0479">Metal-binding</keyword>
<keyword id="KW-0964">Secreted</keyword>
<keyword id="KW-0732">Signal</keyword>
<keyword id="KW-0808">Transferase</keyword>
<reference key="1">
    <citation type="book" date="1988" name="Proceedings of the fourth international symposium on cyclodextrins">
        <title>Cloning and nucleotide sequence of a cyclodextrin glycosyltransferase gene from the alkalophilic Bacillus 1-1.</title>
        <editorList>
            <person name="Huber O."/>
            <person name="Szejtli J."/>
        </editorList>
        <authorList>
            <person name="Schmid G."/>
            <person name="Englbrecht A."/>
            <person name="Schmid D."/>
        </authorList>
    </citation>
    <scope>NUCLEOTIDE SEQUENCE [GENOMIC DNA]</scope>
    <scope>PROTEIN SEQUENCE OF 30-52</scope>
</reference>
<sequence length="703" mass="78663">MNDLNDFLKTILLSFIFFLLLSLPTVAEADVTNKVNYSKDVIYQIVTDRFSDGNPGNNPSGAIFSQNCIDLHKYCGGDWQGIIDKINDGYLTDLGITALWISQPVENVYALHPSGYTSYHGYWARDYKKTNPYYGNFDDFDRLMSTAHSNGIKVIMDFTPNHSSPALETNPNYVENGAIYDNGALLGNYSNDQQNLFHHNGGTDFSSYEDSIYRNLYDLADYDLNNTVMDQYLKESIKFWLDKGIDGIRVDAVKHMSEGWQTSLMSEIYSHKPVFTFGEWFLGSGEVDPQNHHFANESGMSLLDFQFGQTIRNVLKDRTSNWYDFNEMITSTEKEYNEVIDQVTFIDNHDMSRFSVGSSSNRQTDMALAVLLTSRGVPTIYYGTEQYVTGGNDPENRKPLKTFDRSTNSYQIISKLASLRQTNSALGYGTTTERWLNEDIYIYERTFGNSIVLTAVNSSNSNQTITNLNTSLPQGNYTDELQQRLDGNTITVNANGAVNSFQLRANSVAVWQVSNPSTSPLIGQVGPMMGKAGNTITVSGEGFGDERGSVLFDSTSSEIISWSNTKISVKVPNVAGGYYDLSVVTAANIKSPTYKEFEVLSGNQVSVRFGVNNATTSPGTNLYIVGNVNELGNWDADKAIGPMFNQVMYQYPTWYYDISVPAGKNLEYKYIKKDQNGNVVWQSGNNRTYTSPTTGTDTVMINW</sequence>
<protein>
    <recommendedName>
        <fullName>Cyclomaltodextrin glucanotransferase</fullName>
        <ecNumber>2.4.1.19</ecNumber>
    </recommendedName>
    <alternativeName>
        <fullName>Cyclodextrin-glycosyltransferase</fullName>
        <shortName>CGTase</shortName>
    </alternativeName>
</protein>
<evidence type="ECO:0000250" key="1"/>
<evidence type="ECO:0000255" key="2">
    <source>
        <dbReference type="PROSITE-ProRule" id="PRU00594"/>
    </source>
</evidence>
<evidence type="ECO:0000269" key="3">
    <source ref="1"/>
</evidence>
<evidence type="ECO:0000305" key="4"/>